<feature type="chain" id="PRO_1000097910" description="Elongation factor P--(R)-beta-lysine ligase">
    <location>
        <begin position="1"/>
        <end position="325"/>
    </location>
</feature>
<feature type="binding site" evidence="1">
    <location>
        <begin position="76"/>
        <end position="78"/>
    </location>
    <ligand>
        <name>substrate</name>
    </ligand>
</feature>
<feature type="binding site" evidence="1">
    <location>
        <begin position="100"/>
        <end position="102"/>
    </location>
    <ligand>
        <name>ATP</name>
        <dbReference type="ChEBI" id="CHEBI:30616"/>
    </ligand>
</feature>
<feature type="binding site" evidence="1">
    <location>
        <position position="109"/>
    </location>
    <ligand>
        <name>ATP</name>
        <dbReference type="ChEBI" id="CHEBI:30616"/>
    </ligand>
</feature>
<feature type="binding site" evidence="1">
    <location>
        <position position="118"/>
    </location>
    <ligand>
        <name>substrate</name>
    </ligand>
</feature>
<feature type="binding site" evidence="1">
    <location>
        <begin position="244"/>
        <end position="245"/>
    </location>
    <ligand>
        <name>ATP</name>
        <dbReference type="ChEBI" id="CHEBI:30616"/>
    </ligand>
</feature>
<feature type="binding site" evidence="1">
    <location>
        <position position="251"/>
    </location>
    <ligand>
        <name>substrate</name>
    </ligand>
</feature>
<feature type="binding site" evidence="1">
    <location>
        <position position="300"/>
    </location>
    <ligand>
        <name>ATP</name>
        <dbReference type="ChEBI" id="CHEBI:30616"/>
    </ligand>
</feature>
<name>EPMA_SALPK</name>
<gene>
    <name evidence="1" type="primary">epmA</name>
    <name type="synonym">yjeA</name>
    <name type="ordered locus">SSPA3865</name>
</gene>
<proteinExistence type="inferred from homology"/>
<accession>B5BKG8</accession>
<keyword id="KW-0067">ATP-binding</keyword>
<keyword id="KW-0436">Ligase</keyword>
<keyword id="KW-0547">Nucleotide-binding</keyword>
<sequence>MSETATWQPSASIPNLLKRAAIMTEIRRFFADRGVLEVETPCMSQATVTDIHLFPFETRFVGPGHSQGMNLYLMTSPEYHMKRLLAAGCGPVFQLCRSFRNEEMGRHHNPEFTMLEWYRPHYDMYRLMNEVDDLLQQVLDCQPAESLSYQQAFQRHLEIDPLSADKTQLREAAAKLDLSNIADTEEDRDTLLQLLFTMGVEPHIGKEKPTFIYHFPASQASLAQISTEDHRVAERFEVYYKGIELANGFHELTDAREQQQRFEQDNRKRAARGLPQQPIDQNLLDALAAGLPDCSGVALGVDRLVMLALGAESLADVIAFTVDRA</sequence>
<reference key="1">
    <citation type="journal article" date="2009" name="BMC Genomics">
        <title>Pseudogene accumulation in the evolutionary histories of Salmonella enterica serovars Paratyphi A and Typhi.</title>
        <authorList>
            <person name="Holt K.E."/>
            <person name="Thomson N.R."/>
            <person name="Wain J."/>
            <person name="Langridge G.C."/>
            <person name="Hasan R."/>
            <person name="Bhutta Z.A."/>
            <person name="Quail M.A."/>
            <person name="Norbertczak H."/>
            <person name="Walker D."/>
            <person name="Simmonds M."/>
            <person name="White B."/>
            <person name="Bason N."/>
            <person name="Mungall K."/>
            <person name="Dougan G."/>
            <person name="Parkhill J."/>
        </authorList>
    </citation>
    <scope>NUCLEOTIDE SEQUENCE [LARGE SCALE GENOMIC DNA]</scope>
    <source>
        <strain>AKU_12601</strain>
    </source>
</reference>
<dbReference type="EC" id="6.3.2.-" evidence="1"/>
<dbReference type="EMBL" id="FM200053">
    <property type="protein sequence ID" value="CAR62151.1"/>
    <property type="molecule type" value="Genomic_DNA"/>
</dbReference>
<dbReference type="RefSeq" id="WP_000004799.1">
    <property type="nucleotide sequence ID" value="NC_011147.1"/>
</dbReference>
<dbReference type="SMR" id="B5BKG8"/>
<dbReference type="KEGG" id="sek:SSPA3865"/>
<dbReference type="HOGENOM" id="CLU_008255_1_1_6"/>
<dbReference type="Proteomes" id="UP000001869">
    <property type="component" value="Chromosome"/>
</dbReference>
<dbReference type="GO" id="GO:0005829">
    <property type="term" value="C:cytosol"/>
    <property type="evidence" value="ECO:0007669"/>
    <property type="project" value="TreeGrafter"/>
</dbReference>
<dbReference type="GO" id="GO:0016880">
    <property type="term" value="F:acid-ammonia (or amide) ligase activity"/>
    <property type="evidence" value="ECO:0007669"/>
    <property type="project" value="UniProtKB-UniRule"/>
</dbReference>
<dbReference type="GO" id="GO:0005524">
    <property type="term" value="F:ATP binding"/>
    <property type="evidence" value="ECO:0007669"/>
    <property type="project" value="UniProtKB-UniRule"/>
</dbReference>
<dbReference type="GO" id="GO:0004824">
    <property type="term" value="F:lysine-tRNA ligase activity"/>
    <property type="evidence" value="ECO:0007669"/>
    <property type="project" value="InterPro"/>
</dbReference>
<dbReference type="GO" id="GO:0000049">
    <property type="term" value="F:tRNA binding"/>
    <property type="evidence" value="ECO:0007669"/>
    <property type="project" value="TreeGrafter"/>
</dbReference>
<dbReference type="GO" id="GO:0006430">
    <property type="term" value="P:lysyl-tRNA aminoacylation"/>
    <property type="evidence" value="ECO:0007669"/>
    <property type="project" value="InterPro"/>
</dbReference>
<dbReference type="FunFam" id="3.30.930.10:FF:000017">
    <property type="entry name" value="Elongation factor P--(R)-beta-lysine ligase"/>
    <property type="match status" value="1"/>
</dbReference>
<dbReference type="Gene3D" id="3.30.930.10">
    <property type="entry name" value="Bira Bifunctional Protein, Domain 2"/>
    <property type="match status" value="1"/>
</dbReference>
<dbReference type="HAMAP" id="MF_00174">
    <property type="entry name" value="EF_P_modif_A"/>
    <property type="match status" value="1"/>
</dbReference>
<dbReference type="InterPro" id="IPR004364">
    <property type="entry name" value="Aa-tRNA-synt_II"/>
</dbReference>
<dbReference type="InterPro" id="IPR006195">
    <property type="entry name" value="aa-tRNA-synth_II"/>
</dbReference>
<dbReference type="InterPro" id="IPR045864">
    <property type="entry name" value="aa-tRNA-synth_II/BPL/LPL"/>
</dbReference>
<dbReference type="InterPro" id="IPR004525">
    <property type="entry name" value="EpmA"/>
</dbReference>
<dbReference type="InterPro" id="IPR018149">
    <property type="entry name" value="Lys-tRNA-synth_II_C"/>
</dbReference>
<dbReference type="NCBIfam" id="TIGR00462">
    <property type="entry name" value="genX"/>
    <property type="match status" value="1"/>
</dbReference>
<dbReference type="NCBIfam" id="NF006828">
    <property type="entry name" value="PRK09350.1"/>
    <property type="match status" value="1"/>
</dbReference>
<dbReference type="PANTHER" id="PTHR42918:SF6">
    <property type="entry name" value="ELONGATION FACTOR P--(R)-BETA-LYSINE LIGASE"/>
    <property type="match status" value="1"/>
</dbReference>
<dbReference type="PANTHER" id="PTHR42918">
    <property type="entry name" value="LYSYL-TRNA SYNTHETASE"/>
    <property type="match status" value="1"/>
</dbReference>
<dbReference type="Pfam" id="PF00152">
    <property type="entry name" value="tRNA-synt_2"/>
    <property type="match status" value="1"/>
</dbReference>
<dbReference type="PRINTS" id="PR00982">
    <property type="entry name" value="TRNASYNTHLYS"/>
</dbReference>
<dbReference type="SUPFAM" id="SSF55681">
    <property type="entry name" value="Class II aaRS and biotin synthetases"/>
    <property type="match status" value="1"/>
</dbReference>
<dbReference type="PROSITE" id="PS50862">
    <property type="entry name" value="AA_TRNA_LIGASE_II"/>
    <property type="match status" value="1"/>
</dbReference>
<organism>
    <name type="scientific">Salmonella paratyphi A (strain AKU_12601)</name>
    <dbReference type="NCBI Taxonomy" id="554290"/>
    <lineage>
        <taxon>Bacteria</taxon>
        <taxon>Pseudomonadati</taxon>
        <taxon>Pseudomonadota</taxon>
        <taxon>Gammaproteobacteria</taxon>
        <taxon>Enterobacterales</taxon>
        <taxon>Enterobacteriaceae</taxon>
        <taxon>Salmonella</taxon>
    </lineage>
</organism>
<comment type="function">
    <text evidence="1">With EpmB is involved in the beta-lysylation step of the post-translational modification of translation elongation factor P (EF-P) on 'Lys-34'. Catalyzes the ATP-dependent activation of (R)-beta-lysine produced by EpmB, forming a lysyl-adenylate, from which the beta-lysyl moiety is then transferred to the epsilon-amino group of EF-P 'Lys-34'.</text>
</comment>
<comment type="catalytic activity">
    <reaction evidence="1">
        <text>D-beta-lysine + L-lysyl-[protein] + ATP = N(6)-((3R)-3,6-diaminohexanoyl)-L-lysyl-[protein] + AMP + diphosphate + H(+)</text>
        <dbReference type="Rhea" id="RHEA:83435"/>
        <dbReference type="Rhea" id="RHEA-COMP:9752"/>
        <dbReference type="Rhea" id="RHEA-COMP:20131"/>
        <dbReference type="ChEBI" id="CHEBI:15378"/>
        <dbReference type="ChEBI" id="CHEBI:29969"/>
        <dbReference type="ChEBI" id="CHEBI:30616"/>
        <dbReference type="ChEBI" id="CHEBI:33019"/>
        <dbReference type="ChEBI" id="CHEBI:84138"/>
        <dbReference type="ChEBI" id="CHEBI:156053"/>
        <dbReference type="ChEBI" id="CHEBI:456215"/>
    </reaction>
    <physiologicalReaction direction="left-to-right" evidence="1">
        <dbReference type="Rhea" id="RHEA:83436"/>
    </physiologicalReaction>
</comment>
<comment type="subunit">
    <text evidence="1">Homodimer.</text>
</comment>
<comment type="similarity">
    <text evidence="1">Belongs to the class-II aminoacyl-tRNA synthetase family. EpmA subfamily.</text>
</comment>
<evidence type="ECO:0000255" key="1">
    <source>
        <dbReference type="HAMAP-Rule" id="MF_00174"/>
    </source>
</evidence>
<protein>
    <recommendedName>
        <fullName evidence="1">Elongation factor P--(R)-beta-lysine ligase</fullName>
        <shortName evidence="1">EF-P--(R)-beta-lysine ligase</shortName>
        <ecNumber evidence="1">6.3.2.-</ecNumber>
    </recommendedName>
    <alternativeName>
        <fullName evidence="1">EF-P post-translational modification enzyme A</fullName>
    </alternativeName>
    <alternativeName>
        <fullName evidence="1">EF-P-lysine lysyltransferase</fullName>
    </alternativeName>
</protein>